<gene>
    <name evidence="1" type="primary">rpmJ</name>
    <name type="ordered locus">BTH_I3046</name>
</gene>
<sequence>MKVMASVKRICRNCKIIKRKGVVRVICSSDPRHKQRQG</sequence>
<feature type="chain" id="PRO_0000344652" description="Large ribosomal subunit protein bL36">
    <location>
        <begin position="1"/>
        <end position="38"/>
    </location>
</feature>
<comment type="similarity">
    <text evidence="1">Belongs to the bacterial ribosomal protein bL36 family.</text>
</comment>
<comment type="sequence caution" evidence="2">
    <conflict type="erroneous initiation">
        <sequence resource="EMBL-CDS" id="ABC39427"/>
    </conflict>
</comment>
<evidence type="ECO:0000255" key="1">
    <source>
        <dbReference type="HAMAP-Rule" id="MF_00251"/>
    </source>
</evidence>
<evidence type="ECO:0000305" key="2"/>
<keyword id="KW-0687">Ribonucleoprotein</keyword>
<keyword id="KW-0689">Ribosomal protein</keyword>
<dbReference type="EMBL" id="CP000086">
    <property type="protein sequence ID" value="ABC39427.1"/>
    <property type="status" value="ALT_INIT"/>
    <property type="molecule type" value="Genomic_DNA"/>
</dbReference>
<dbReference type="RefSeq" id="WP_004199844.1">
    <property type="nucleotide sequence ID" value="NZ_CP008786.1"/>
</dbReference>
<dbReference type="SMR" id="Q2SU49"/>
<dbReference type="GeneID" id="98107138"/>
<dbReference type="KEGG" id="bte:BTH_I3046"/>
<dbReference type="HOGENOM" id="CLU_135723_6_2_4"/>
<dbReference type="Proteomes" id="UP000001930">
    <property type="component" value="Chromosome I"/>
</dbReference>
<dbReference type="GO" id="GO:0005737">
    <property type="term" value="C:cytoplasm"/>
    <property type="evidence" value="ECO:0007669"/>
    <property type="project" value="UniProtKB-ARBA"/>
</dbReference>
<dbReference type="GO" id="GO:1990904">
    <property type="term" value="C:ribonucleoprotein complex"/>
    <property type="evidence" value="ECO:0007669"/>
    <property type="project" value="UniProtKB-KW"/>
</dbReference>
<dbReference type="GO" id="GO:0005840">
    <property type="term" value="C:ribosome"/>
    <property type="evidence" value="ECO:0007669"/>
    <property type="project" value="UniProtKB-KW"/>
</dbReference>
<dbReference type="GO" id="GO:0003735">
    <property type="term" value="F:structural constituent of ribosome"/>
    <property type="evidence" value="ECO:0007669"/>
    <property type="project" value="InterPro"/>
</dbReference>
<dbReference type="GO" id="GO:0006412">
    <property type="term" value="P:translation"/>
    <property type="evidence" value="ECO:0007669"/>
    <property type="project" value="UniProtKB-UniRule"/>
</dbReference>
<dbReference type="HAMAP" id="MF_00251">
    <property type="entry name" value="Ribosomal_bL36"/>
    <property type="match status" value="1"/>
</dbReference>
<dbReference type="InterPro" id="IPR000473">
    <property type="entry name" value="Ribosomal_bL36"/>
</dbReference>
<dbReference type="InterPro" id="IPR035977">
    <property type="entry name" value="Ribosomal_bL36_sp"/>
</dbReference>
<dbReference type="NCBIfam" id="TIGR01022">
    <property type="entry name" value="rpmJ_bact"/>
    <property type="match status" value="1"/>
</dbReference>
<dbReference type="PANTHER" id="PTHR42888">
    <property type="entry name" value="50S RIBOSOMAL PROTEIN L36, CHLOROPLASTIC"/>
    <property type="match status" value="1"/>
</dbReference>
<dbReference type="PANTHER" id="PTHR42888:SF1">
    <property type="entry name" value="LARGE RIBOSOMAL SUBUNIT PROTEIN BL36C"/>
    <property type="match status" value="1"/>
</dbReference>
<dbReference type="Pfam" id="PF00444">
    <property type="entry name" value="Ribosomal_L36"/>
    <property type="match status" value="1"/>
</dbReference>
<dbReference type="SUPFAM" id="SSF57840">
    <property type="entry name" value="Ribosomal protein L36"/>
    <property type="match status" value="1"/>
</dbReference>
<dbReference type="PROSITE" id="PS00828">
    <property type="entry name" value="RIBOSOMAL_L36"/>
    <property type="match status" value="1"/>
</dbReference>
<protein>
    <recommendedName>
        <fullName evidence="1">Large ribosomal subunit protein bL36</fullName>
    </recommendedName>
    <alternativeName>
        <fullName evidence="2">50S ribosomal protein L36</fullName>
    </alternativeName>
</protein>
<proteinExistence type="inferred from homology"/>
<name>RL36_BURTA</name>
<accession>Q2SU49</accession>
<reference key="1">
    <citation type="journal article" date="2005" name="BMC Genomics">
        <title>Bacterial genome adaptation to niches: divergence of the potential virulence genes in three Burkholderia species of different survival strategies.</title>
        <authorList>
            <person name="Kim H.S."/>
            <person name="Schell M.A."/>
            <person name="Yu Y."/>
            <person name="Ulrich R.L."/>
            <person name="Sarria S.H."/>
            <person name="Nierman W.C."/>
            <person name="DeShazer D."/>
        </authorList>
    </citation>
    <scope>NUCLEOTIDE SEQUENCE [LARGE SCALE GENOMIC DNA]</scope>
    <source>
        <strain>ATCC 700388 / DSM 13276 / CCUG 48851 / CIP 106301 / E264</strain>
    </source>
</reference>
<organism>
    <name type="scientific">Burkholderia thailandensis (strain ATCC 700388 / DSM 13276 / CCUG 48851 / CIP 106301 / E264)</name>
    <dbReference type="NCBI Taxonomy" id="271848"/>
    <lineage>
        <taxon>Bacteria</taxon>
        <taxon>Pseudomonadati</taxon>
        <taxon>Pseudomonadota</taxon>
        <taxon>Betaproteobacteria</taxon>
        <taxon>Burkholderiales</taxon>
        <taxon>Burkholderiaceae</taxon>
        <taxon>Burkholderia</taxon>
        <taxon>pseudomallei group</taxon>
    </lineage>
</organism>